<comment type="function">
    <text evidence="1">ATP-binding RNA helicase involved in the biogenesis of 60S ribosomal subunits and is required for the normal formation of 25S and 5.8S rRNAs.</text>
</comment>
<comment type="catalytic activity">
    <reaction>
        <text>ATP + H2O = ADP + phosphate + H(+)</text>
        <dbReference type="Rhea" id="RHEA:13065"/>
        <dbReference type="ChEBI" id="CHEBI:15377"/>
        <dbReference type="ChEBI" id="CHEBI:15378"/>
        <dbReference type="ChEBI" id="CHEBI:30616"/>
        <dbReference type="ChEBI" id="CHEBI:43474"/>
        <dbReference type="ChEBI" id="CHEBI:456216"/>
        <dbReference type="EC" id="3.6.4.13"/>
    </reaction>
</comment>
<comment type="subcellular location">
    <subcellularLocation>
        <location evidence="1">Nucleus</location>
        <location evidence="1">Nucleolus</location>
    </subcellularLocation>
</comment>
<comment type="domain">
    <text>The Q motif is unique to and characteristic of the DEAD box family of RNA helicases and controls ATP binding and hydrolysis.</text>
</comment>
<comment type="similarity">
    <text evidence="5">Belongs to the DEAD box helicase family. DDX54/DBP10 subfamily.</text>
</comment>
<dbReference type="EC" id="3.6.4.13"/>
<dbReference type="EMBL" id="AAEY01000011">
    <property type="protein sequence ID" value="EAL22334.1"/>
    <property type="molecule type" value="Genomic_DNA"/>
</dbReference>
<dbReference type="RefSeq" id="XP_776981.1">
    <property type="nucleotide sequence ID" value="XM_771888.1"/>
</dbReference>
<dbReference type="SMR" id="P0CR07"/>
<dbReference type="EnsemblFungi" id="AAW41764">
    <property type="protein sequence ID" value="AAW41764"/>
    <property type="gene ID" value="CNB00610"/>
</dbReference>
<dbReference type="GeneID" id="4934604"/>
<dbReference type="KEGG" id="cnb:CNBB5090"/>
<dbReference type="VEuPathDB" id="FungiDB:CNBB5090"/>
<dbReference type="HOGENOM" id="CLU_003041_5_2_1"/>
<dbReference type="OrthoDB" id="5004at5206"/>
<dbReference type="GO" id="GO:0005829">
    <property type="term" value="C:cytosol"/>
    <property type="evidence" value="ECO:0007669"/>
    <property type="project" value="TreeGrafter"/>
</dbReference>
<dbReference type="GO" id="GO:0005730">
    <property type="term" value="C:nucleolus"/>
    <property type="evidence" value="ECO:0007669"/>
    <property type="project" value="UniProtKB-SubCell"/>
</dbReference>
<dbReference type="GO" id="GO:0005524">
    <property type="term" value="F:ATP binding"/>
    <property type="evidence" value="ECO:0007669"/>
    <property type="project" value="UniProtKB-KW"/>
</dbReference>
<dbReference type="GO" id="GO:0016887">
    <property type="term" value="F:ATP hydrolysis activity"/>
    <property type="evidence" value="ECO:0007669"/>
    <property type="project" value="RHEA"/>
</dbReference>
<dbReference type="GO" id="GO:0003723">
    <property type="term" value="F:RNA binding"/>
    <property type="evidence" value="ECO:0007669"/>
    <property type="project" value="UniProtKB-KW"/>
</dbReference>
<dbReference type="GO" id="GO:0003724">
    <property type="term" value="F:RNA helicase activity"/>
    <property type="evidence" value="ECO:0007669"/>
    <property type="project" value="UniProtKB-EC"/>
</dbReference>
<dbReference type="GO" id="GO:0006364">
    <property type="term" value="P:rRNA processing"/>
    <property type="evidence" value="ECO:0007669"/>
    <property type="project" value="UniProtKB-KW"/>
</dbReference>
<dbReference type="CDD" id="cd18787">
    <property type="entry name" value="SF2_C_DEAD"/>
    <property type="match status" value="1"/>
</dbReference>
<dbReference type="Gene3D" id="3.40.50.300">
    <property type="entry name" value="P-loop containing nucleotide triphosphate hydrolases"/>
    <property type="match status" value="2"/>
</dbReference>
<dbReference type="InterPro" id="IPR012541">
    <property type="entry name" value="DBP10_C"/>
</dbReference>
<dbReference type="InterPro" id="IPR011545">
    <property type="entry name" value="DEAD/DEAH_box_helicase_dom"/>
</dbReference>
<dbReference type="InterPro" id="IPR050079">
    <property type="entry name" value="DEAD_box_RNA_helicase"/>
</dbReference>
<dbReference type="InterPro" id="IPR014001">
    <property type="entry name" value="Helicase_ATP-bd"/>
</dbReference>
<dbReference type="InterPro" id="IPR001650">
    <property type="entry name" value="Helicase_C-like"/>
</dbReference>
<dbReference type="InterPro" id="IPR027417">
    <property type="entry name" value="P-loop_NTPase"/>
</dbReference>
<dbReference type="PANTHER" id="PTHR47959">
    <property type="entry name" value="ATP-DEPENDENT RNA HELICASE RHLE-RELATED"/>
    <property type="match status" value="1"/>
</dbReference>
<dbReference type="PANTHER" id="PTHR47959:SF8">
    <property type="entry name" value="RNA HELICASE"/>
    <property type="match status" value="1"/>
</dbReference>
<dbReference type="Pfam" id="PF08147">
    <property type="entry name" value="DBP10CT"/>
    <property type="match status" value="1"/>
</dbReference>
<dbReference type="Pfam" id="PF00270">
    <property type="entry name" value="DEAD"/>
    <property type="match status" value="1"/>
</dbReference>
<dbReference type="Pfam" id="PF00271">
    <property type="entry name" value="Helicase_C"/>
    <property type="match status" value="1"/>
</dbReference>
<dbReference type="SMART" id="SM01123">
    <property type="entry name" value="DBP10CT"/>
    <property type="match status" value="1"/>
</dbReference>
<dbReference type="SMART" id="SM00487">
    <property type="entry name" value="DEXDc"/>
    <property type="match status" value="1"/>
</dbReference>
<dbReference type="SMART" id="SM00490">
    <property type="entry name" value="HELICc"/>
    <property type="match status" value="1"/>
</dbReference>
<dbReference type="SUPFAM" id="SSF52540">
    <property type="entry name" value="P-loop containing nucleoside triphosphate hydrolases"/>
    <property type="match status" value="1"/>
</dbReference>
<dbReference type="PROSITE" id="PS51192">
    <property type="entry name" value="HELICASE_ATP_BIND_1"/>
    <property type="match status" value="1"/>
</dbReference>
<dbReference type="PROSITE" id="PS51194">
    <property type="entry name" value="HELICASE_CTER"/>
    <property type="match status" value="1"/>
</dbReference>
<dbReference type="PROSITE" id="PS51195">
    <property type="entry name" value="Q_MOTIF"/>
    <property type="match status" value="1"/>
</dbReference>
<sequence>MAAITPSWALETTADGEVKEKTSGPGGQWRALNVGPDLIRSLLIRKFKTPTPIQRAAIPPALSTPPRDILGMARTGSGKTLAYLIPLLQRTGSTHHGQGPRALILCPSRELAVQIYTVGKDLARGMNKGKGKGKNKNEDEEDEEGKGKEGLRWALIIGGEGMDAQFEKMSSNPDIVIATPGRFLHLIVEMHMDLRHLQTVIYDEADRLFEMGFDVQLQEILHRLPSTRQNLLFSATLPSSVAEFAKAGLVNPLLVRLDAEQKISPDLALKFFSVKPGEKEASLLVLLREVIGKPNQPEPADPSSAPQAIVFVATKHHVDYVAELLRTTGYRTSLIYSSLDQVARQQQLAGFRSHQSDVLVVTDVAARGLDIPIMDHVINYDFPAGPRIFVHRVGRTARAGRKGTAYSLIVKEDFPYLCDLHTFLGTERMGEPADVLRSLPIEQLSENVEYVFHNLDETAPHITALRNVMRKGQGMFERSRTKANPTSYRQAKSLASALSNNPPRIDDMFEDAMEVEVNEEKARLLAKVAAFTPSETVFEVGKRESESAIIMKKRRKTVDERQKRVSKAEAEKSTASGMEKAPVKELPAPQLPSKNFKDPSFYLDHTQRGAEAEKGYSLKSGVESLSGAITDMTADEGTGPKAQKASQLSWDRKKHKFIKKNGSADGEKMIKSESGALLPASYSSGKYQEWKSKRRHMPDGPVEALALGGGRRGRHGPPGQKRKAEDGDGGEDAGGKGRKDQGKSKGTGKGKDDFKQKSPGKPGKKGIKQSSGLKSAMDIRKQREIAQKRKEKNARKPQKFRK</sequence>
<accession>P0CR07</accession>
<accession>Q55X53</accession>
<accession>Q5KMS9</accession>
<evidence type="ECO:0000250" key="1"/>
<evidence type="ECO:0000255" key="2">
    <source>
        <dbReference type="PROSITE-ProRule" id="PRU00541"/>
    </source>
</evidence>
<evidence type="ECO:0000255" key="3">
    <source>
        <dbReference type="PROSITE-ProRule" id="PRU00542"/>
    </source>
</evidence>
<evidence type="ECO:0000256" key="4">
    <source>
        <dbReference type="SAM" id="MobiDB-lite"/>
    </source>
</evidence>
<evidence type="ECO:0000305" key="5"/>
<protein>
    <recommendedName>
        <fullName>ATP-dependent RNA helicase DBP10</fullName>
        <ecNumber>3.6.4.13</ecNumber>
    </recommendedName>
</protein>
<feature type="chain" id="PRO_0000410264" description="ATP-dependent RNA helicase DBP10">
    <location>
        <begin position="1"/>
        <end position="802"/>
    </location>
</feature>
<feature type="domain" description="Helicase ATP-binding" evidence="2">
    <location>
        <begin position="60"/>
        <end position="255"/>
    </location>
</feature>
<feature type="domain" description="Helicase C-terminal" evidence="3">
    <location>
        <begin position="286"/>
        <end position="447"/>
    </location>
</feature>
<feature type="region of interest" description="Disordered" evidence="4">
    <location>
        <begin position="126"/>
        <end position="147"/>
    </location>
</feature>
<feature type="region of interest" description="Disordered" evidence="4">
    <location>
        <begin position="555"/>
        <end position="596"/>
    </location>
</feature>
<feature type="region of interest" description="Disordered" evidence="4">
    <location>
        <begin position="632"/>
        <end position="802"/>
    </location>
</feature>
<feature type="short sequence motif" description="Q motif">
    <location>
        <begin position="27"/>
        <end position="55"/>
    </location>
</feature>
<feature type="short sequence motif" description="DEAD box">
    <location>
        <begin position="203"/>
        <end position="206"/>
    </location>
</feature>
<feature type="compositionally biased region" description="Basic and acidic residues" evidence="4">
    <location>
        <begin position="557"/>
        <end position="572"/>
    </location>
</feature>
<feature type="compositionally biased region" description="Basic and acidic residues" evidence="4">
    <location>
        <begin position="733"/>
        <end position="756"/>
    </location>
</feature>
<feature type="compositionally biased region" description="Basic and acidic residues" evidence="4">
    <location>
        <begin position="777"/>
        <end position="788"/>
    </location>
</feature>
<feature type="compositionally biased region" description="Basic residues" evidence="4">
    <location>
        <begin position="789"/>
        <end position="802"/>
    </location>
</feature>
<feature type="binding site" evidence="2">
    <location>
        <begin position="73"/>
        <end position="80"/>
    </location>
    <ligand>
        <name>ATP</name>
        <dbReference type="ChEBI" id="CHEBI:30616"/>
    </ligand>
</feature>
<name>DBP10_CRYNB</name>
<keyword id="KW-0067">ATP-binding</keyword>
<keyword id="KW-0347">Helicase</keyword>
<keyword id="KW-0378">Hydrolase</keyword>
<keyword id="KW-0547">Nucleotide-binding</keyword>
<keyword id="KW-0539">Nucleus</keyword>
<keyword id="KW-0690">Ribosome biogenesis</keyword>
<keyword id="KW-0694">RNA-binding</keyword>
<keyword id="KW-0698">rRNA processing</keyword>
<gene>
    <name type="primary">DBP10</name>
    <name type="ordered locus">CNBB5090</name>
</gene>
<organism>
    <name type="scientific">Cryptococcus neoformans var. neoformans serotype D (strain B-3501A)</name>
    <name type="common">Filobasidiella neoformans</name>
    <dbReference type="NCBI Taxonomy" id="283643"/>
    <lineage>
        <taxon>Eukaryota</taxon>
        <taxon>Fungi</taxon>
        <taxon>Dikarya</taxon>
        <taxon>Basidiomycota</taxon>
        <taxon>Agaricomycotina</taxon>
        <taxon>Tremellomycetes</taxon>
        <taxon>Tremellales</taxon>
        <taxon>Cryptococcaceae</taxon>
        <taxon>Cryptococcus</taxon>
        <taxon>Cryptococcus neoformans species complex</taxon>
    </lineage>
</organism>
<reference key="1">
    <citation type="journal article" date="2005" name="Science">
        <title>The genome of the basidiomycetous yeast and human pathogen Cryptococcus neoformans.</title>
        <authorList>
            <person name="Loftus B.J."/>
            <person name="Fung E."/>
            <person name="Roncaglia P."/>
            <person name="Rowley D."/>
            <person name="Amedeo P."/>
            <person name="Bruno D."/>
            <person name="Vamathevan J."/>
            <person name="Miranda M."/>
            <person name="Anderson I.J."/>
            <person name="Fraser J.A."/>
            <person name="Allen J.E."/>
            <person name="Bosdet I.E."/>
            <person name="Brent M.R."/>
            <person name="Chiu R."/>
            <person name="Doering T.L."/>
            <person name="Donlin M.J."/>
            <person name="D'Souza C.A."/>
            <person name="Fox D.S."/>
            <person name="Grinberg V."/>
            <person name="Fu J."/>
            <person name="Fukushima M."/>
            <person name="Haas B.J."/>
            <person name="Huang J.C."/>
            <person name="Janbon G."/>
            <person name="Jones S.J.M."/>
            <person name="Koo H.L."/>
            <person name="Krzywinski M.I."/>
            <person name="Kwon-Chung K.J."/>
            <person name="Lengeler K.B."/>
            <person name="Maiti R."/>
            <person name="Marra M.A."/>
            <person name="Marra R.E."/>
            <person name="Mathewson C.A."/>
            <person name="Mitchell T.G."/>
            <person name="Pertea M."/>
            <person name="Riggs F.R."/>
            <person name="Salzberg S.L."/>
            <person name="Schein J.E."/>
            <person name="Shvartsbeyn A."/>
            <person name="Shin H."/>
            <person name="Shumway M."/>
            <person name="Specht C.A."/>
            <person name="Suh B.B."/>
            <person name="Tenney A."/>
            <person name="Utterback T.R."/>
            <person name="Wickes B.L."/>
            <person name="Wortman J.R."/>
            <person name="Wye N.H."/>
            <person name="Kronstad J.W."/>
            <person name="Lodge J.K."/>
            <person name="Heitman J."/>
            <person name="Davis R.W."/>
            <person name="Fraser C.M."/>
            <person name="Hyman R.W."/>
        </authorList>
    </citation>
    <scope>NUCLEOTIDE SEQUENCE [LARGE SCALE GENOMIC DNA]</scope>
    <source>
        <strain>B-3501A</strain>
    </source>
</reference>
<proteinExistence type="inferred from homology"/>